<sequence length="701" mass="75463">MDPTSKSGLNQVSDVVFVIEGTANLGPYFESLRNNYILPTIEYFNGGPPAETDFGGDYGGTQYGLVVFNTVDCAPESYVQCHAPTSSAFEFVSWIDSIQFMGGGAESCSLIAEGLSVALQLFDDFKKMREQIGQTHKVCVLLCNSPPYLLPAVESVSYTGCTADSLVQIIRDRGIHFSVIAPRKLPALRSLFERASSVAGLPESSHPDYSQDPFHMVLVRGIALPVAPGGGSVPVSLKPVLPPQSLPVNQNPLVPVASTAPQMNTFQNVSLHAAHDAAQKALEEAANQQQKNRFGQISTPPFSQSPVLPPGGKPSLSTVTTVSPPVLTQQQVPPQQPQQQTQVPQPGLPAVNQQPPQASQQQPNNQQTPPPTQPGMAAVPAPPPGAQQGVANKVVAWSGVLEWQEKPKASSMDSNTKLTRSLPCQVQVSQGENLNTDQWPQKLIMQLIPQQLLTTLGPLFRNSRMVQFLFTNKDMESLKGLFRIMTSGFAGCVHFPHSAPCEVRVLMLLYSSRKRIFMGLIPNDQSGFVNGIRQVITNHKQVQQQRSMQPGQVQPNQNFLNRPPGPIPVTHGNVPQQLRAAATGNQQAPVTGAPPNQVQGQAQAPGGGMLRLQNPGANPQLRSLLLSQQPQGGMQGMQGMHPIQQMVHAAPGGGAQMQPQWRQPHQGPLMVPTGPRGPVTQNPGMPSVSSVMEDEILMDLI</sequence>
<feature type="chain" id="PRO_0000304954" description="Mediator of RNA polymerase II transcription subunit 25">
    <location>
        <begin position="1"/>
        <end position="701"/>
    </location>
</feature>
<feature type="region of interest" description="Disordered" evidence="2">
    <location>
        <begin position="277"/>
        <end position="388"/>
    </location>
</feature>
<feature type="region of interest" description="Disordered" evidence="2">
    <location>
        <begin position="580"/>
        <end position="617"/>
    </location>
</feature>
<feature type="region of interest" description="Disordered" evidence="2">
    <location>
        <begin position="650"/>
        <end position="689"/>
    </location>
</feature>
<feature type="short sequence motif" description="LXXLL motif">
    <location>
        <begin position="621"/>
        <end position="625"/>
    </location>
</feature>
<feature type="compositionally biased region" description="Polar residues" evidence="2">
    <location>
        <begin position="286"/>
        <end position="306"/>
    </location>
</feature>
<feature type="compositionally biased region" description="Low complexity" evidence="2">
    <location>
        <begin position="314"/>
        <end position="367"/>
    </location>
</feature>
<feature type="compositionally biased region" description="Low complexity" evidence="2">
    <location>
        <begin position="593"/>
        <end position="604"/>
    </location>
</feature>
<feature type="compositionally biased region" description="Polar residues" evidence="2">
    <location>
        <begin position="679"/>
        <end position="689"/>
    </location>
</feature>
<accession>Q6PEH8</accession>
<proteinExistence type="evidence at transcript level"/>
<name>MED25_DANRE</name>
<protein>
    <recommendedName>
        <fullName>Mediator of RNA polymerase II transcription subunit 25</fullName>
    </recommendedName>
    <alternativeName>
        <fullName>Mediator complex subunit 25</fullName>
    </alternativeName>
</protein>
<organism>
    <name type="scientific">Danio rerio</name>
    <name type="common">Zebrafish</name>
    <name type="synonym">Brachydanio rerio</name>
    <dbReference type="NCBI Taxonomy" id="7955"/>
    <lineage>
        <taxon>Eukaryota</taxon>
        <taxon>Metazoa</taxon>
        <taxon>Chordata</taxon>
        <taxon>Craniata</taxon>
        <taxon>Vertebrata</taxon>
        <taxon>Euteleostomi</taxon>
        <taxon>Actinopterygii</taxon>
        <taxon>Neopterygii</taxon>
        <taxon>Teleostei</taxon>
        <taxon>Ostariophysi</taxon>
        <taxon>Cypriniformes</taxon>
        <taxon>Danionidae</taxon>
        <taxon>Danioninae</taxon>
        <taxon>Danio</taxon>
    </lineage>
</organism>
<gene>
    <name type="primary">med25</name>
</gene>
<dbReference type="EMBL" id="BC058057">
    <property type="protein sequence ID" value="AAH58057.1"/>
    <property type="molecule type" value="mRNA"/>
</dbReference>
<dbReference type="RefSeq" id="NP_999931.1">
    <property type="nucleotide sequence ID" value="NM_214766.2"/>
</dbReference>
<dbReference type="SMR" id="Q6PEH8"/>
<dbReference type="FunCoup" id="Q6PEH8">
    <property type="interactions" value="1137"/>
</dbReference>
<dbReference type="STRING" id="7955.ENSDARP00000055392"/>
<dbReference type="PaxDb" id="7955-ENSDARP00000055392"/>
<dbReference type="GeneID" id="406793"/>
<dbReference type="KEGG" id="dre:406793"/>
<dbReference type="AGR" id="ZFIN:ZDB-GENE-040426-2850"/>
<dbReference type="CTD" id="81857"/>
<dbReference type="ZFIN" id="ZDB-GENE-040426-2850">
    <property type="gene designation" value="med25"/>
</dbReference>
<dbReference type="eggNOG" id="ENOG502QRN5">
    <property type="taxonomic scope" value="Eukaryota"/>
</dbReference>
<dbReference type="InParanoid" id="Q6PEH8"/>
<dbReference type="OrthoDB" id="7690434at2759"/>
<dbReference type="PhylomeDB" id="Q6PEH8"/>
<dbReference type="PRO" id="PR:Q6PEH8"/>
<dbReference type="Proteomes" id="UP000000437">
    <property type="component" value="Alternate scaffold 3"/>
</dbReference>
<dbReference type="Proteomes" id="UP000000437">
    <property type="component" value="Chromosome 3"/>
</dbReference>
<dbReference type="GO" id="GO:0016592">
    <property type="term" value="C:mediator complex"/>
    <property type="evidence" value="ECO:0000318"/>
    <property type="project" value="GO_Central"/>
</dbReference>
<dbReference type="GO" id="GO:0005667">
    <property type="term" value="C:transcription regulator complex"/>
    <property type="evidence" value="ECO:0000318"/>
    <property type="project" value="GO_Central"/>
</dbReference>
<dbReference type="GO" id="GO:0045944">
    <property type="term" value="P:positive regulation of transcription by RNA polymerase II"/>
    <property type="evidence" value="ECO:0000318"/>
    <property type="project" value="GO_Central"/>
</dbReference>
<dbReference type="GO" id="GO:0060021">
    <property type="term" value="P:roof of mouth development"/>
    <property type="evidence" value="ECO:0000315"/>
    <property type="project" value="ZFIN"/>
</dbReference>
<dbReference type="FunFam" id="2.40.290.30:FF:000001">
    <property type="entry name" value="Mediator of RNA polymerase II transcription subunit 25"/>
    <property type="match status" value="1"/>
</dbReference>
<dbReference type="Gene3D" id="2.40.290.30">
    <property type="entry name" value="Mediator complex subunit 25, ACID domain"/>
    <property type="match status" value="1"/>
</dbReference>
<dbReference type="Gene3D" id="3.40.50.410">
    <property type="entry name" value="von Willebrand factor, type A domain"/>
    <property type="match status" value="1"/>
</dbReference>
<dbReference type="InterPro" id="IPR021394">
    <property type="entry name" value="Med25_PTOV"/>
</dbReference>
<dbReference type="InterPro" id="IPR038196">
    <property type="entry name" value="Med25_PTOV_sf"/>
</dbReference>
<dbReference type="InterPro" id="IPR021419">
    <property type="entry name" value="Mediator_Med25_VWA"/>
</dbReference>
<dbReference type="InterPro" id="IPR002035">
    <property type="entry name" value="VWF_A"/>
</dbReference>
<dbReference type="InterPro" id="IPR036465">
    <property type="entry name" value="vWFA_dom_sf"/>
</dbReference>
<dbReference type="PANTHER" id="PTHR12433">
    <property type="entry name" value="MEDIATOR OF RNA POLYMERASE II TRANSCRIPTION SUBUNIT 25"/>
    <property type="match status" value="1"/>
</dbReference>
<dbReference type="PANTHER" id="PTHR12433:SF11">
    <property type="entry name" value="MEDIATOR OF RNA POLYMERASE II TRANSCRIPTION SUBUNIT 25"/>
    <property type="match status" value="1"/>
</dbReference>
<dbReference type="Pfam" id="PF11232">
    <property type="entry name" value="Med25"/>
    <property type="match status" value="1"/>
</dbReference>
<dbReference type="Pfam" id="PF11265">
    <property type="entry name" value="Med25_VWA"/>
    <property type="match status" value="1"/>
</dbReference>
<dbReference type="SUPFAM" id="SSF53300">
    <property type="entry name" value="vWA-like"/>
    <property type="match status" value="1"/>
</dbReference>
<dbReference type="PROSITE" id="PS50234">
    <property type="entry name" value="VWFA"/>
    <property type="match status" value="1"/>
</dbReference>
<keyword id="KW-0010">Activator</keyword>
<keyword id="KW-0539">Nucleus</keyword>
<keyword id="KW-1185">Reference proteome</keyword>
<keyword id="KW-0804">Transcription</keyword>
<keyword id="KW-0805">Transcription regulation</keyword>
<comment type="function">
    <text evidence="1">Component of the Mediator complex, a coactivator involved in the regulated transcription of nearly all RNA polymerase II-dependent genes. Mediator functions as a bridge to convey information from gene-specific regulatory proteins to the basal RNA polymerase II transcription machinery. Mediator is recruited to promoters by direct interactions with regulatory proteins and serves as a scaffold for the assembly of a functional preinitiation complex with RNA polymerase II and the general transcription factors (By similarity).</text>
</comment>
<comment type="subunit">
    <text evidence="1">Component of the Mediator complex.</text>
</comment>
<comment type="subcellular location">
    <subcellularLocation>
        <location evidence="1">Nucleus</location>
    </subcellularLocation>
</comment>
<comment type="similarity">
    <text evidence="3">Belongs to the Mediator complex subunit 25 family.</text>
</comment>
<evidence type="ECO:0000250" key="1"/>
<evidence type="ECO:0000256" key="2">
    <source>
        <dbReference type="SAM" id="MobiDB-lite"/>
    </source>
</evidence>
<evidence type="ECO:0000305" key="3"/>
<reference key="1">
    <citation type="submission" date="2003-09" db="EMBL/GenBank/DDBJ databases">
        <authorList>
            <consortium name="NIH - Zebrafish Gene Collection (ZGC) project"/>
        </authorList>
    </citation>
    <scope>NUCLEOTIDE SEQUENCE [LARGE SCALE MRNA]</scope>
    <source>
        <strain>AB</strain>
    </source>
</reference>